<protein>
    <recommendedName>
        <fullName evidence="1">Translation initiation factor IF-3</fullName>
    </recommendedName>
</protein>
<comment type="function">
    <text evidence="1">IF-3 binds to the 30S ribosomal subunit and shifts the equilibrium between 70S ribosomes and their 50S and 30S subunits in favor of the free subunits, thus enhancing the availability of 30S subunits on which protein synthesis initiation begins.</text>
</comment>
<comment type="subunit">
    <text evidence="1">Monomer.</text>
</comment>
<comment type="subcellular location">
    <subcellularLocation>
        <location evidence="1">Cytoplasm</location>
    </subcellularLocation>
</comment>
<comment type="similarity">
    <text evidence="1">Belongs to the IF-3 family.</text>
</comment>
<comment type="sequence caution" evidence="2">
    <conflict type="erroneous initiation">
        <sequence resource="EMBL-CDS" id="BAC18319"/>
    </conflict>
</comment>
<sequence length="203" mass="23194">MNGFLVCQRGNFLKWYGTSSFSRTANRGVHISAEARINERIRVPEVRLVGPNGEQVGIVRIEDARKLAFDADLDLVEVAPTAKPPVCKIMDYGKFKYEAAQKARESRKNQQQTVVKEQKLRPKIDDHDYETKKSNVIRFLEKGSKVKVTIMFRGREQARPELGYRLLERLANDVAEYGVVETRAKQDGRNMTMVIGPLRKGKK</sequence>
<proteinExistence type="inferred from homology"/>
<reference key="1">
    <citation type="journal article" date="2003" name="Genome Res.">
        <title>Comparative complete genome sequence analysis of the amino acid replacements responsible for the thermostability of Corynebacterium efficiens.</title>
        <authorList>
            <person name="Nishio Y."/>
            <person name="Nakamura Y."/>
            <person name="Kawarabayasi Y."/>
            <person name="Usuda Y."/>
            <person name="Kimura E."/>
            <person name="Sugimoto S."/>
            <person name="Matsui K."/>
            <person name="Yamagishi A."/>
            <person name="Kikuchi H."/>
            <person name="Ikeo K."/>
            <person name="Gojobori T."/>
        </authorList>
    </citation>
    <scope>NUCLEOTIDE SEQUENCE [LARGE SCALE GENOMIC DNA]</scope>
    <source>
        <strain>DSM 44549 / YS-314 / AJ 12310 / JCM 11189 / NBRC 100395</strain>
    </source>
</reference>
<name>IF3_COREF</name>
<feature type="chain" id="PRO_0000177511" description="Translation initiation factor IF-3">
    <location>
        <begin position="1"/>
        <end position="203"/>
    </location>
</feature>
<organism>
    <name type="scientific">Corynebacterium efficiens (strain DSM 44549 / YS-314 / AJ 12310 / JCM 11189 / NBRC 100395)</name>
    <dbReference type="NCBI Taxonomy" id="196164"/>
    <lineage>
        <taxon>Bacteria</taxon>
        <taxon>Bacillati</taxon>
        <taxon>Actinomycetota</taxon>
        <taxon>Actinomycetes</taxon>
        <taxon>Mycobacteriales</taxon>
        <taxon>Corynebacteriaceae</taxon>
        <taxon>Corynebacterium</taxon>
    </lineage>
</organism>
<gene>
    <name evidence="1" type="primary">infC</name>
    <name type="ordered locus">CE1509</name>
</gene>
<evidence type="ECO:0000255" key="1">
    <source>
        <dbReference type="HAMAP-Rule" id="MF_00080"/>
    </source>
</evidence>
<evidence type="ECO:0000305" key="2"/>
<keyword id="KW-0963">Cytoplasm</keyword>
<keyword id="KW-0396">Initiation factor</keyword>
<keyword id="KW-0648">Protein biosynthesis</keyword>
<keyword id="KW-1185">Reference proteome</keyword>
<dbReference type="EMBL" id="BA000035">
    <property type="protein sequence ID" value="BAC18319.1"/>
    <property type="status" value="ALT_INIT"/>
    <property type="molecule type" value="Genomic_DNA"/>
</dbReference>
<dbReference type="RefSeq" id="WP_006770416.1">
    <property type="nucleotide sequence ID" value="NC_004369.1"/>
</dbReference>
<dbReference type="SMR" id="Q8FTQ2"/>
<dbReference type="STRING" id="196164.gene:10741924"/>
<dbReference type="KEGG" id="cef:CE1509"/>
<dbReference type="eggNOG" id="COG0290">
    <property type="taxonomic scope" value="Bacteria"/>
</dbReference>
<dbReference type="HOGENOM" id="CLU_054919_3_2_11"/>
<dbReference type="OrthoDB" id="9806014at2"/>
<dbReference type="Proteomes" id="UP000001409">
    <property type="component" value="Chromosome"/>
</dbReference>
<dbReference type="GO" id="GO:0005829">
    <property type="term" value="C:cytosol"/>
    <property type="evidence" value="ECO:0007669"/>
    <property type="project" value="TreeGrafter"/>
</dbReference>
<dbReference type="GO" id="GO:0016020">
    <property type="term" value="C:membrane"/>
    <property type="evidence" value="ECO:0007669"/>
    <property type="project" value="TreeGrafter"/>
</dbReference>
<dbReference type="GO" id="GO:0043022">
    <property type="term" value="F:ribosome binding"/>
    <property type="evidence" value="ECO:0007669"/>
    <property type="project" value="TreeGrafter"/>
</dbReference>
<dbReference type="GO" id="GO:0003743">
    <property type="term" value="F:translation initiation factor activity"/>
    <property type="evidence" value="ECO:0007669"/>
    <property type="project" value="UniProtKB-UniRule"/>
</dbReference>
<dbReference type="GO" id="GO:0032790">
    <property type="term" value="P:ribosome disassembly"/>
    <property type="evidence" value="ECO:0007669"/>
    <property type="project" value="TreeGrafter"/>
</dbReference>
<dbReference type="FunFam" id="3.10.20.80:FF:000001">
    <property type="entry name" value="Translation initiation factor IF-3"/>
    <property type="match status" value="1"/>
</dbReference>
<dbReference type="FunFam" id="3.30.110.10:FF:000002">
    <property type="entry name" value="Translation initiation factor IF-3"/>
    <property type="match status" value="1"/>
</dbReference>
<dbReference type="Gene3D" id="3.30.110.10">
    <property type="entry name" value="Translation initiation factor 3 (IF-3), C-terminal domain"/>
    <property type="match status" value="1"/>
</dbReference>
<dbReference type="Gene3D" id="3.10.20.80">
    <property type="entry name" value="Translation initiation factor 3 (IF-3), N-terminal domain"/>
    <property type="match status" value="1"/>
</dbReference>
<dbReference type="HAMAP" id="MF_00080">
    <property type="entry name" value="IF_3"/>
    <property type="match status" value="1"/>
</dbReference>
<dbReference type="InterPro" id="IPR036788">
    <property type="entry name" value="T_IF-3_C_sf"/>
</dbReference>
<dbReference type="InterPro" id="IPR036787">
    <property type="entry name" value="T_IF-3_N_sf"/>
</dbReference>
<dbReference type="InterPro" id="IPR019813">
    <property type="entry name" value="Translation_initiation_fac3_CS"/>
</dbReference>
<dbReference type="InterPro" id="IPR001288">
    <property type="entry name" value="Translation_initiation_fac_3"/>
</dbReference>
<dbReference type="InterPro" id="IPR019815">
    <property type="entry name" value="Translation_initiation_fac_3_C"/>
</dbReference>
<dbReference type="InterPro" id="IPR019814">
    <property type="entry name" value="Translation_initiation_fac_3_N"/>
</dbReference>
<dbReference type="NCBIfam" id="TIGR00168">
    <property type="entry name" value="infC"/>
    <property type="match status" value="1"/>
</dbReference>
<dbReference type="PANTHER" id="PTHR10938">
    <property type="entry name" value="TRANSLATION INITIATION FACTOR IF-3"/>
    <property type="match status" value="1"/>
</dbReference>
<dbReference type="PANTHER" id="PTHR10938:SF0">
    <property type="entry name" value="TRANSLATION INITIATION FACTOR IF-3, MITOCHONDRIAL"/>
    <property type="match status" value="1"/>
</dbReference>
<dbReference type="Pfam" id="PF00707">
    <property type="entry name" value="IF3_C"/>
    <property type="match status" value="1"/>
</dbReference>
<dbReference type="Pfam" id="PF05198">
    <property type="entry name" value="IF3_N"/>
    <property type="match status" value="1"/>
</dbReference>
<dbReference type="SUPFAM" id="SSF55200">
    <property type="entry name" value="Translation initiation factor IF3, C-terminal domain"/>
    <property type="match status" value="1"/>
</dbReference>
<dbReference type="SUPFAM" id="SSF54364">
    <property type="entry name" value="Translation initiation factor IF3, N-terminal domain"/>
    <property type="match status" value="1"/>
</dbReference>
<dbReference type="PROSITE" id="PS00938">
    <property type="entry name" value="IF3"/>
    <property type="match status" value="1"/>
</dbReference>
<accession>Q8FTQ2</accession>